<name>RPB1_EREGS</name>
<keyword id="KW-0238">DNA-binding</keyword>
<keyword id="KW-0240">DNA-directed RNA polymerase</keyword>
<keyword id="KW-1017">Isopeptide bond</keyword>
<keyword id="KW-0460">Magnesium</keyword>
<keyword id="KW-0479">Metal-binding</keyword>
<keyword id="KW-0548">Nucleotidyltransferase</keyword>
<keyword id="KW-0539">Nucleus</keyword>
<keyword id="KW-0597">Phosphoprotein</keyword>
<keyword id="KW-1185">Reference proteome</keyword>
<keyword id="KW-0677">Repeat</keyword>
<keyword id="KW-0804">Transcription</keyword>
<keyword id="KW-0808">Transferase</keyword>
<keyword id="KW-0832">Ubl conjugation</keyword>
<keyword id="KW-0862">Zinc</keyword>
<protein>
    <recommendedName>
        <fullName>DNA-directed RNA polymerase II subunit RPB1</fullName>
        <shortName>RNA polymerase II subunit 1</shortName>
        <shortName>RNA polymerase II subunit B1</shortName>
        <ecNumber>2.7.7.6</ecNumber>
    </recommendedName>
    <alternativeName>
        <fullName>DNA-directed RNA polymerase III largest subunit</fullName>
    </alternativeName>
</protein>
<feature type="chain" id="PRO_0000073944" description="DNA-directed RNA polymerase II subunit RPB1">
    <location>
        <begin position="1"/>
        <end position="1745"/>
    </location>
</feature>
<feature type="repeat" description="1">
    <location>
        <begin position="1552"/>
        <end position="1558"/>
    </location>
</feature>
<feature type="repeat" description="2">
    <location>
        <begin position="1559"/>
        <end position="1565"/>
    </location>
</feature>
<feature type="repeat" description="3">
    <location>
        <begin position="1566"/>
        <end position="1572"/>
    </location>
</feature>
<feature type="repeat" description="4">
    <location>
        <begin position="1573"/>
        <end position="1579"/>
    </location>
</feature>
<feature type="repeat" description="5">
    <location>
        <begin position="1580"/>
        <end position="1586"/>
    </location>
</feature>
<feature type="repeat" description="6">
    <location>
        <begin position="1587"/>
        <end position="1593"/>
    </location>
</feature>
<feature type="repeat" description="7">
    <location>
        <begin position="1594"/>
        <end position="1600"/>
    </location>
</feature>
<feature type="repeat" description="8">
    <location>
        <begin position="1601"/>
        <end position="1607"/>
    </location>
</feature>
<feature type="repeat" description="9">
    <location>
        <begin position="1608"/>
        <end position="1614"/>
    </location>
</feature>
<feature type="repeat" description="10">
    <location>
        <begin position="1615"/>
        <end position="1621"/>
    </location>
</feature>
<feature type="repeat" description="11">
    <location>
        <begin position="1622"/>
        <end position="1628"/>
    </location>
</feature>
<feature type="repeat" description="12">
    <location>
        <begin position="1629"/>
        <end position="1635"/>
    </location>
</feature>
<feature type="repeat" description="13">
    <location>
        <begin position="1636"/>
        <end position="1642"/>
    </location>
</feature>
<feature type="repeat" description="14">
    <location>
        <begin position="1643"/>
        <end position="1649"/>
    </location>
</feature>
<feature type="repeat" description="15">
    <location>
        <begin position="1650"/>
        <end position="1656"/>
    </location>
</feature>
<feature type="repeat" description="16">
    <location>
        <begin position="1657"/>
        <end position="1663"/>
    </location>
</feature>
<feature type="repeat" description="17">
    <location>
        <begin position="1664"/>
        <end position="1670"/>
    </location>
</feature>
<feature type="repeat" description="18">
    <location>
        <begin position="1671"/>
        <end position="1677"/>
    </location>
</feature>
<feature type="repeat" description="19">
    <location>
        <begin position="1678"/>
        <end position="1684"/>
    </location>
</feature>
<feature type="repeat" description="20">
    <location>
        <begin position="1685"/>
        <end position="1691"/>
    </location>
</feature>
<feature type="repeat" description="21">
    <location>
        <begin position="1692"/>
        <end position="1698"/>
    </location>
</feature>
<feature type="repeat" description="22">
    <location>
        <begin position="1699"/>
        <end position="1705"/>
    </location>
</feature>
<feature type="repeat" description="23">
    <location>
        <begin position="1706"/>
        <end position="1712"/>
    </location>
</feature>
<feature type="repeat" description="24">
    <location>
        <begin position="1713"/>
        <end position="1719"/>
    </location>
</feature>
<feature type="repeat" description="25; approximate">
    <location>
        <begin position="1720"/>
        <end position="1726"/>
    </location>
</feature>
<feature type="region of interest" description="Bridging helix">
    <location>
        <begin position="810"/>
        <end position="822"/>
    </location>
</feature>
<feature type="region of interest" description="Disordered" evidence="3">
    <location>
        <begin position="1530"/>
        <end position="1745"/>
    </location>
</feature>
<feature type="region of interest" description="C-terminal domain (CTD); 25 X 7 AA approximate tandem repeats of Y-S-P-T-S-P-[TSAN]">
    <location>
        <begin position="1552"/>
        <end position="1726"/>
    </location>
</feature>
<feature type="compositionally biased region" description="Low complexity" evidence="3">
    <location>
        <begin position="1546"/>
        <end position="1730"/>
    </location>
</feature>
<feature type="compositionally biased region" description="Basic and acidic residues" evidence="3">
    <location>
        <begin position="1734"/>
        <end position="1745"/>
    </location>
</feature>
<feature type="binding site" evidence="2">
    <location>
        <position position="67"/>
    </location>
    <ligand>
        <name>Zn(2+)</name>
        <dbReference type="ChEBI" id="CHEBI:29105"/>
        <label>1</label>
    </ligand>
</feature>
<feature type="binding site" evidence="2">
    <location>
        <position position="70"/>
    </location>
    <ligand>
        <name>Zn(2+)</name>
        <dbReference type="ChEBI" id="CHEBI:29105"/>
        <label>1</label>
    </ligand>
</feature>
<feature type="binding site" evidence="2">
    <location>
        <position position="77"/>
    </location>
    <ligand>
        <name>Zn(2+)</name>
        <dbReference type="ChEBI" id="CHEBI:29105"/>
        <label>1</label>
    </ligand>
</feature>
<feature type="binding site" evidence="2">
    <location>
        <position position="80"/>
    </location>
    <ligand>
        <name>Zn(2+)</name>
        <dbReference type="ChEBI" id="CHEBI:29105"/>
        <label>1</label>
    </ligand>
</feature>
<feature type="binding site" evidence="2">
    <location>
        <position position="107"/>
    </location>
    <ligand>
        <name>Zn(2+)</name>
        <dbReference type="ChEBI" id="CHEBI:29105"/>
        <label>2</label>
    </ligand>
</feature>
<feature type="binding site" evidence="2">
    <location>
        <position position="110"/>
    </location>
    <ligand>
        <name>Zn(2+)</name>
        <dbReference type="ChEBI" id="CHEBI:29105"/>
        <label>2</label>
    </ligand>
</feature>
<feature type="binding site" evidence="2">
    <location>
        <position position="148"/>
    </location>
    <ligand>
        <name>Zn(2+)</name>
        <dbReference type="ChEBI" id="CHEBI:29105"/>
        <label>2</label>
    </ligand>
</feature>
<feature type="binding site" evidence="2">
    <location>
        <position position="167"/>
    </location>
    <ligand>
        <name>Zn(2+)</name>
        <dbReference type="ChEBI" id="CHEBI:29105"/>
        <label>2</label>
    </ligand>
</feature>
<feature type="binding site" evidence="2">
    <location>
        <position position="481"/>
    </location>
    <ligand>
        <name>Mg(2+)</name>
        <dbReference type="ChEBI" id="CHEBI:18420"/>
        <label>1</label>
        <note>catalytic</note>
    </ligand>
</feature>
<feature type="binding site" evidence="2">
    <location>
        <position position="481"/>
    </location>
    <ligand>
        <name>Mg(2+)</name>
        <dbReference type="ChEBI" id="CHEBI:18420"/>
        <label>2</label>
        <note>ligand shared with RPB2</note>
    </ligand>
</feature>
<feature type="binding site" evidence="2">
    <location>
        <position position="483"/>
    </location>
    <ligand>
        <name>Mg(2+)</name>
        <dbReference type="ChEBI" id="CHEBI:18420"/>
        <label>1</label>
        <note>catalytic</note>
    </ligand>
</feature>
<feature type="binding site" evidence="2">
    <location>
        <position position="483"/>
    </location>
    <ligand>
        <name>Mg(2+)</name>
        <dbReference type="ChEBI" id="CHEBI:18420"/>
        <label>2</label>
        <note>ligand shared with RPB2</note>
    </ligand>
</feature>
<feature type="binding site" evidence="2">
    <location>
        <position position="485"/>
    </location>
    <ligand>
        <name>Mg(2+)</name>
        <dbReference type="ChEBI" id="CHEBI:18420"/>
        <label>1</label>
        <note>catalytic</note>
    </ligand>
</feature>
<feature type="cross-link" description="Glycyl lysine isopeptide (Lys-Gly) (interchain with G-Cter in ubiquitin)" evidence="2">
    <location>
        <position position="1247"/>
    </location>
</feature>
<reference key="1">
    <citation type="journal article" date="2004" name="Science">
        <title>The Ashbya gossypii genome as a tool for mapping the ancient Saccharomyces cerevisiae genome.</title>
        <authorList>
            <person name="Dietrich F.S."/>
            <person name="Voegeli S."/>
            <person name="Brachat S."/>
            <person name="Lerch A."/>
            <person name="Gates K."/>
            <person name="Steiner S."/>
            <person name="Mohr C."/>
            <person name="Poehlmann R."/>
            <person name="Luedi P."/>
            <person name="Choi S."/>
            <person name="Wing R.A."/>
            <person name="Flavier A."/>
            <person name="Gaffney T.D."/>
            <person name="Philippsen P."/>
        </authorList>
    </citation>
    <scope>NUCLEOTIDE SEQUENCE [LARGE SCALE GENOMIC DNA]</scope>
    <source>
        <strain>ATCC 10895 / CBS 109.51 / FGSC 9923 / NRRL Y-1056</strain>
    </source>
</reference>
<reference key="2">
    <citation type="journal article" date="2013" name="G3 (Bethesda)">
        <title>Genomes of Ashbya fungi isolated from insects reveal four mating-type loci, numerous translocations, lack of transposons, and distinct gene duplications.</title>
        <authorList>
            <person name="Dietrich F.S."/>
            <person name="Voegeli S."/>
            <person name="Kuo S."/>
            <person name="Philippsen P."/>
        </authorList>
    </citation>
    <scope>GENOME REANNOTATION</scope>
    <scope>SEQUENCE REVISION TO 1147</scope>
    <source>
        <strain>ATCC 10895 / CBS 109.51 / FGSC 9923 / NRRL Y-1056</strain>
    </source>
</reference>
<reference key="3">
    <citation type="submission" date="2003-12" db="EMBL/GenBank/DDBJ databases">
        <title>Molecular phylogeny and evolution of Candida and related species within the order saccharomycetales as inferred from multilocus sequence analysis.</title>
        <authorList>
            <person name="Diezmann S."/>
            <person name="Cox C.J."/>
            <person name="Schoenian G."/>
            <person name="Vilgalys R.J."/>
            <person name="Mitchell T.G."/>
        </authorList>
    </citation>
    <scope>NUCLEOTIDE SEQUENCE [GENOMIC DNA] OF 85-291</scope>
    <source>
        <strain>ATCC 8717 / IMI 31268</strain>
    </source>
</reference>
<accession>Q75A34</accession>
<accession>Q6JED0</accession>
<dbReference type="EC" id="2.7.7.6"/>
<dbReference type="EMBL" id="AE016817">
    <property type="protein sequence ID" value="AAS52006.2"/>
    <property type="molecule type" value="Genomic_DNA"/>
</dbReference>
<dbReference type="EMBL" id="AY497699">
    <property type="protein sequence ID" value="AAT12576.1"/>
    <property type="molecule type" value="Genomic_DNA"/>
</dbReference>
<dbReference type="RefSeq" id="NP_984182.2">
    <property type="nucleotide sequence ID" value="NM_209535.2"/>
</dbReference>
<dbReference type="SMR" id="Q75A34"/>
<dbReference type="FunCoup" id="Q75A34">
    <property type="interactions" value="1254"/>
</dbReference>
<dbReference type="STRING" id="284811.Q75A34"/>
<dbReference type="EnsemblFungi" id="AAS52006">
    <property type="protein sequence ID" value="AAS52006"/>
    <property type="gene ID" value="AGOS_ADR086C"/>
</dbReference>
<dbReference type="GeneID" id="4620331"/>
<dbReference type="KEGG" id="ago:AGOS_ADR086C"/>
<dbReference type="eggNOG" id="KOG0260">
    <property type="taxonomic scope" value="Eukaryota"/>
</dbReference>
<dbReference type="HOGENOM" id="CLU_000487_3_0_1"/>
<dbReference type="InParanoid" id="Q75A34"/>
<dbReference type="OMA" id="KPCMGIV"/>
<dbReference type="OrthoDB" id="270392at2759"/>
<dbReference type="Proteomes" id="UP000000591">
    <property type="component" value="Chromosome IV"/>
</dbReference>
<dbReference type="GO" id="GO:0005739">
    <property type="term" value="C:mitochondrion"/>
    <property type="evidence" value="ECO:0007669"/>
    <property type="project" value="GOC"/>
</dbReference>
<dbReference type="GO" id="GO:0005665">
    <property type="term" value="C:RNA polymerase II, core complex"/>
    <property type="evidence" value="ECO:0000318"/>
    <property type="project" value="GO_Central"/>
</dbReference>
<dbReference type="GO" id="GO:0003677">
    <property type="term" value="F:DNA binding"/>
    <property type="evidence" value="ECO:0007669"/>
    <property type="project" value="UniProtKB-KW"/>
</dbReference>
<dbReference type="GO" id="GO:0003899">
    <property type="term" value="F:DNA-directed RNA polymerase activity"/>
    <property type="evidence" value="ECO:0007669"/>
    <property type="project" value="UniProtKB-EC"/>
</dbReference>
<dbReference type="GO" id="GO:0046872">
    <property type="term" value="F:metal ion binding"/>
    <property type="evidence" value="ECO:0007669"/>
    <property type="project" value="UniProtKB-KW"/>
</dbReference>
<dbReference type="GO" id="GO:0003968">
    <property type="term" value="F:RNA-directed RNA polymerase activity"/>
    <property type="evidence" value="ECO:0007669"/>
    <property type="project" value="EnsemblFungi"/>
</dbReference>
<dbReference type="GO" id="GO:0006368">
    <property type="term" value="P:transcription elongation by RNA polymerase II"/>
    <property type="evidence" value="ECO:0007669"/>
    <property type="project" value="EnsemblFungi"/>
</dbReference>
<dbReference type="GO" id="GO:0006367">
    <property type="term" value="P:transcription initiation at RNA polymerase II promoter"/>
    <property type="evidence" value="ECO:0007669"/>
    <property type="project" value="EnsemblFungi"/>
</dbReference>
<dbReference type="GO" id="GO:0019985">
    <property type="term" value="P:translesion synthesis"/>
    <property type="evidence" value="ECO:0007669"/>
    <property type="project" value="EnsemblFungi"/>
</dbReference>
<dbReference type="CDD" id="cd02584">
    <property type="entry name" value="RNAP_II_Rpb1_C"/>
    <property type="match status" value="1"/>
</dbReference>
<dbReference type="CDD" id="cd02733">
    <property type="entry name" value="RNAP_II_RPB1_N"/>
    <property type="match status" value="1"/>
</dbReference>
<dbReference type="FunFam" id="2.40.40.20:FF:000019">
    <property type="entry name" value="DNA-directed RNA polymerase II subunit RPB1"/>
    <property type="match status" value="1"/>
</dbReference>
<dbReference type="FunFam" id="1.10.132.30:FF:000001">
    <property type="entry name" value="DNA-directed RNA polymerase subunit"/>
    <property type="match status" value="1"/>
</dbReference>
<dbReference type="FunFam" id="1.10.150.390:FF:000001">
    <property type="entry name" value="DNA-directed RNA polymerase subunit"/>
    <property type="match status" value="1"/>
</dbReference>
<dbReference type="FunFam" id="1.10.274.100:FF:000001">
    <property type="entry name" value="DNA-directed RNA polymerase subunit"/>
    <property type="match status" value="1"/>
</dbReference>
<dbReference type="FunFam" id="3.30.1360.140:FF:000001">
    <property type="entry name" value="DNA-directed RNA polymerase subunit"/>
    <property type="match status" value="1"/>
</dbReference>
<dbReference type="FunFam" id="3.30.1490.180:FF:000001">
    <property type="entry name" value="DNA-directed RNA polymerase subunit"/>
    <property type="match status" value="1"/>
</dbReference>
<dbReference type="FunFam" id="4.10.860.120:FF:000003">
    <property type="entry name" value="DNA-directed RNA polymerase subunit"/>
    <property type="match status" value="1"/>
</dbReference>
<dbReference type="Gene3D" id="1.10.132.30">
    <property type="match status" value="1"/>
</dbReference>
<dbReference type="Gene3D" id="1.10.150.390">
    <property type="match status" value="1"/>
</dbReference>
<dbReference type="Gene3D" id="2.40.40.20">
    <property type="match status" value="1"/>
</dbReference>
<dbReference type="Gene3D" id="3.30.1360.140">
    <property type="match status" value="1"/>
</dbReference>
<dbReference type="Gene3D" id="6.10.250.2940">
    <property type="match status" value="1"/>
</dbReference>
<dbReference type="Gene3D" id="6.20.50.80">
    <property type="match status" value="1"/>
</dbReference>
<dbReference type="Gene3D" id="3.30.1490.180">
    <property type="entry name" value="RNA polymerase ii"/>
    <property type="match status" value="1"/>
</dbReference>
<dbReference type="Gene3D" id="4.10.860.120">
    <property type="entry name" value="RNA polymerase II, clamp domain"/>
    <property type="match status" value="2"/>
</dbReference>
<dbReference type="Gene3D" id="1.10.274.100">
    <property type="entry name" value="RNA polymerase Rpb1, domain 3"/>
    <property type="match status" value="1"/>
</dbReference>
<dbReference type="InterPro" id="IPR045867">
    <property type="entry name" value="DNA-dir_RpoC_beta_prime"/>
</dbReference>
<dbReference type="InterPro" id="IPR000722">
    <property type="entry name" value="RNA_pol_asu"/>
</dbReference>
<dbReference type="InterPro" id="IPR000684">
    <property type="entry name" value="RNA_pol_II_repeat_euk"/>
</dbReference>
<dbReference type="InterPro" id="IPR006592">
    <property type="entry name" value="RNA_pol_N"/>
</dbReference>
<dbReference type="InterPro" id="IPR007080">
    <property type="entry name" value="RNA_pol_Rpb1_1"/>
</dbReference>
<dbReference type="InterPro" id="IPR007066">
    <property type="entry name" value="RNA_pol_Rpb1_3"/>
</dbReference>
<dbReference type="InterPro" id="IPR042102">
    <property type="entry name" value="RNA_pol_Rpb1_3_sf"/>
</dbReference>
<dbReference type="InterPro" id="IPR007083">
    <property type="entry name" value="RNA_pol_Rpb1_4"/>
</dbReference>
<dbReference type="InterPro" id="IPR007081">
    <property type="entry name" value="RNA_pol_Rpb1_5"/>
</dbReference>
<dbReference type="InterPro" id="IPR007075">
    <property type="entry name" value="RNA_pol_Rpb1_6"/>
</dbReference>
<dbReference type="InterPro" id="IPR007073">
    <property type="entry name" value="RNA_pol_Rpb1_7"/>
</dbReference>
<dbReference type="InterPro" id="IPR038593">
    <property type="entry name" value="RNA_pol_Rpb1_7_sf"/>
</dbReference>
<dbReference type="InterPro" id="IPR044893">
    <property type="entry name" value="RNA_pol_Rpb1_clamp_domain"/>
</dbReference>
<dbReference type="InterPro" id="IPR038120">
    <property type="entry name" value="Rpb1_funnel_sf"/>
</dbReference>
<dbReference type="NCBIfam" id="NF006336">
    <property type="entry name" value="PRK08566.1"/>
    <property type="match status" value="1"/>
</dbReference>
<dbReference type="PANTHER" id="PTHR19376">
    <property type="entry name" value="DNA-DIRECTED RNA POLYMERASE"/>
    <property type="match status" value="1"/>
</dbReference>
<dbReference type="PANTHER" id="PTHR19376:SF37">
    <property type="entry name" value="DNA-DIRECTED RNA POLYMERASE II SUBUNIT RPB1"/>
    <property type="match status" value="1"/>
</dbReference>
<dbReference type="Pfam" id="PF04997">
    <property type="entry name" value="RNA_pol_Rpb1_1"/>
    <property type="match status" value="1"/>
</dbReference>
<dbReference type="Pfam" id="PF00623">
    <property type="entry name" value="RNA_pol_Rpb1_2"/>
    <property type="match status" value="1"/>
</dbReference>
<dbReference type="Pfam" id="PF04983">
    <property type="entry name" value="RNA_pol_Rpb1_3"/>
    <property type="match status" value="1"/>
</dbReference>
<dbReference type="Pfam" id="PF05000">
    <property type="entry name" value="RNA_pol_Rpb1_4"/>
    <property type="match status" value="1"/>
</dbReference>
<dbReference type="Pfam" id="PF04998">
    <property type="entry name" value="RNA_pol_Rpb1_5"/>
    <property type="match status" value="1"/>
</dbReference>
<dbReference type="Pfam" id="PF04992">
    <property type="entry name" value="RNA_pol_Rpb1_6"/>
    <property type="match status" value="1"/>
</dbReference>
<dbReference type="Pfam" id="PF04990">
    <property type="entry name" value="RNA_pol_Rpb1_7"/>
    <property type="match status" value="1"/>
</dbReference>
<dbReference type="Pfam" id="PF05001">
    <property type="entry name" value="RNA_pol_Rpb1_R"/>
    <property type="match status" value="27"/>
</dbReference>
<dbReference type="PRINTS" id="PR01217">
    <property type="entry name" value="PRICHEXTENSN"/>
</dbReference>
<dbReference type="SMART" id="SM00663">
    <property type="entry name" value="RPOLA_N"/>
    <property type="match status" value="1"/>
</dbReference>
<dbReference type="SUPFAM" id="SSF64484">
    <property type="entry name" value="beta and beta-prime subunits of DNA dependent RNA-polymerase"/>
    <property type="match status" value="1"/>
</dbReference>
<dbReference type="PROSITE" id="PS00115">
    <property type="entry name" value="RNA_POL_II_REPEAT"/>
    <property type="match status" value="23"/>
</dbReference>
<proteinExistence type="inferred from homology"/>
<comment type="function">
    <text evidence="1">DNA-dependent RNA polymerase catalyzes the transcription of DNA into RNA using the four ribonucleoside triphosphates as substrates. Largest and catalytic component of RNA polymerase II which synthesizes mRNA precursors and many functional non-coding RNAs. Forms the polymerase active center together with the second largest subunit. Pol II is the central component of the basal RNA polymerase II transcription machinery. It is composed of mobile elements that move relative to each other. RPB1 is part of the core element with the central large cleft, the clamp element that moves to open and close the cleft and the jaws that are thought to grab the incoming DNA template. At the start of transcription, a single-stranded DNA template strand of the promoter is positioned within the central active site cleft of Pol II. A bridging helix emanates from RPB1 and crosses the cleft near the catalytic site and is thought to promote translocation of Pol II by acting as a ratchet that moves the RNA-DNA hybrid through the active site by switching from straight to bent conformations at each step of nucleotide addition. During transcription elongation, Pol II moves on the template as the transcript elongates. Elongation is influenced by the phosphorylation status of the C-terminal domain (CTD) of Pol II largest subunit (RPB1), which serves as a platform for assembly of factors that regulate transcription initiation, elongation, termination and mRNA processing (By similarity).</text>
</comment>
<comment type="catalytic activity">
    <reaction>
        <text>RNA(n) + a ribonucleoside 5'-triphosphate = RNA(n+1) + diphosphate</text>
        <dbReference type="Rhea" id="RHEA:21248"/>
        <dbReference type="Rhea" id="RHEA-COMP:14527"/>
        <dbReference type="Rhea" id="RHEA-COMP:17342"/>
        <dbReference type="ChEBI" id="CHEBI:33019"/>
        <dbReference type="ChEBI" id="CHEBI:61557"/>
        <dbReference type="ChEBI" id="CHEBI:140395"/>
        <dbReference type="EC" id="2.7.7.6"/>
    </reaction>
</comment>
<comment type="subunit">
    <text evidence="1">Component of the RNA polymerase II (Pol II) complex consisting of 12 subunits.</text>
</comment>
<comment type="subcellular location">
    <subcellularLocation>
        <location evidence="2">Nucleus</location>
    </subcellularLocation>
</comment>
<comment type="domain">
    <text evidence="4">The C-terminal domain (CTD) serves as a platform for assembly of factors that regulate transcription initiation, elongation, termination and mRNA processing.</text>
</comment>
<comment type="PTM">
    <text evidence="2">The tandem 7 residues repeats in the C-terminal domain (CTD) can be highly phosphorylated. The phosphorylation activates Pol II. Phosphorylation occurs mainly at residues 'Ser-2' and 'Ser-5' of the heptapeptide repeat. The phosphorylation state is believed to result from the balanced action of site-specific CTD kinases and phosphatase, and a 'CTD code' that specifies the position of Pol II within the transcription cycle has been proposed (By similarity).</text>
</comment>
<comment type="PTM">
    <text evidence="2">Following transcription stress, the elongating form of RNA polymerase II (RNA pol IIo) is polyubiquitinated via 'Lys-63'-linkages on Lys-1247 at DNA damage sites without leading to degradation: ubiquitination promotes RNA pol IIo backtracking to allow access by the transcription-coupled nucleotide excision repair (TC-NER) machinery. Subsequent DEF1-dependent polyubiquitination by the elongin complex via 'Lys-48'-linkages may lead to proteasome-mediated degradation; presumably at stalled RNA pol II where TC-NER has failed, to halt global transcription and enable 'last resort' DNA repair pathways.</text>
</comment>
<comment type="miscellaneous">
    <text>The binding of ribonucleoside triphosphate to the RNA polymerase II transcribing complex probably involves a two-step mechanism. The initial binding seems to occur at the entry (E) site and involves a magnesium ion temporarily coordinated by three conserved aspartate residues of the two largest RNA Pol II subunits. The ribonucleoside triphosphate is transferred by a rotation to the nucleotide addition (A) site for pairing with the template DNA. The catalytic A site involves three conserved aspartate residues of the RNA Pol II largest subunit which permanently coordinate a second magnesium ion.</text>
</comment>
<comment type="similarity">
    <text evidence="4">Belongs to the RNA polymerase beta' chain family.</text>
</comment>
<organism>
    <name type="scientific">Eremothecium gossypii (strain ATCC 10895 / CBS 109.51 / FGSC 9923 / NRRL Y-1056)</name>
    <name type="common">Yeast</name>
    <name type="synonym">Ashbya gossypii</name>
    <dbReference type="NCBI Taxonomy" id="284811"/>
    <lineage>
        <taxon>Eukaryota</taxon>
        <taxon>Fungi</taxon>
        <taxon>Dikarya</taxon>
        <taxon>Ascomycota</taxon>
        <taxon>Saccharomycotina</taxon>
        <taxon>Saccharomycetes</taxon>
        <taxon>Saccharomycetales</taxon>
        <taxon>Saccharomycetaceae</taxon>
        <taxon>Eremothecium</taxon>
    </lineage>
</organism>
<gene>
    <name type="primary">RPB1</name>
    <name type="ordered locus">ADR086C</name>
</gene>
<evidence type="ECO:0000250" key="1"/>
<evidence type="ECO:0000250" key="2">
    <source>
        <dbReference type="UniProtKB" id="P04050"/>
    </source>
</evidence>
<evidence type="ECO:0000256" key="3">
    <source>
        <dbReference type="SAM" id="MobiDB-lite"/>
    </source>
</evidence>
<evidence type="ECO:0000305" key="4"/>
<sequence>MVDFPYSSAPLRTIKEVQFGLFSPEEVRAISVAKIEFPETMDETQMRAKVGGLNDPRLGSIDRNFKCQTCGEGMNDCPGHFGHIELAKPVFHIGFISKIKKVCECVCMHCGKLLLDEYNELMRQAIKIKDPKRRFNAVWSLCKAKMVCDTEVPSEDDPSKYISRGGCGNAQPSIRKDGLSLVGTWKKDKNAEDADQPEKRIISAEEILNVFKHISPEDSWRLGFNEDFSRPEWMLLTVLPVPPPPVRPSISFNESQRGEDDLTYKLGDILKANINVQRLEINGSPQHVIQESESLLQFHVATYMDNDIAGQPQAVQKSGRPIKSIRARLKGKEGRIRGNLMGKRVDFSARTVISGDPNLDLDQVGVPKSIAKTLTYPEVVTPYNIDRLTQLVRNGPNEHPGAKYVIRDNGDRIDLRYSKRAGDIQLQYGWKVERHIMDDDPVLFNRQPSLHKMSMMAHRVKVMPYSTFRLNLSVTSPYNADFDGDEMNLHVPQSEETRAELSQLCAVPLQIVSPQSNKPCMGIVQDTLCGIRKMTLRDTFIELDQVLNMLYWIPDWDGVIPTPTILKPKPLWSGKQLLSMAIPSGIHLQRFDEGTTYLSPKDNGMLIIDGQIIFGVVDKKTVGSSSGGLIHVVTREKGPEVCAKLFGNIQKVVNYWLLHNGFSIGIGDTIADEKTMREITDAIALAKKKVEEVTKEAQANLLTAKHGMTLRESFEDNVVRYLNEARDKAGRSAEVNLKDLNNVKQMVSAGSKGSFINIAQMSACVGQQSVEGKRIAFGFADRTLPHFSKDDYSPESKGFVENSYLRGLTPQEFFFHAMGGREGLIDTAVKTAETGYIQRRLVKALEDIMVHYDGTTRNSLGNIIQFVYGEDGMDAAHIEKQSIDTIPGSDLAFEKRYRIDLLNPNYALDPNLLESGTEIVGDLKLQNLLDEEYKQLVQDRHFLRKIFMDGEHNWPLPVNIRRIIQNAQQTFRIDSTKPTDLSIQDVVQGVRGLQERLLVLRGKSQILQEAQENAITLFCCLLRSRLATRRVITEYRLTKQTFEWVLNNIEAQFLRSIVHPGEMVGVLAAQSIGEPATQMTLNTFHFAGVASKKVTSGVPRLKEILNVAKNMKTPSLTVYLEESYATDQEKAKLIRSAIEHTTLKSVTVASEIYYDPDPSSTVIEEDEEIIQLHFSLMDEETEASLKHQSPWLLRLELDRVAMTDKDLTMGQVGEKIKETFKNDLFVIWSEDNAEKLIIRCRVVRDPKTLDAEAEAEEDHMLKKIENTMLESITLRGVQDITRVVMMKYDRKVPSETGEYHKIPEWVLETDGVNLSEVMSVPGVDPTRIYTNSFIDIMNVLGIEAGRAALYKEVYNVIASDGSYVNYRHMALLVDVMTSQGFLMSVTRHGFNRADTGALMRCSFEETVEILFEAGAAAELDDCSGVSENVILGQMAPIGTGSFDVMIDDESLIKYMPEQKLSTAVEVNDGGATPYNSDAGLVNTKVDIKDELMFSPLVEAGTSDAIASGGFTAYGGADYGGATSPFSGYGNGPTSPGFGDVSSPGFSPTSPAYSPTSPSYSPTSPSYSPTSPSYSPTSPSYSPTSPSYSPTSPSYSPTSPSYSPTSPSYSPTSPSYSPTSPSYSPTSPSYSPTSPSYSPTSPSYSPTSPSYSPTSPSYSPTSPSYSPTSPSYSPTSPSYSPTSPSYSPTSPSYSPTSPSYSPTSPSYSPTSPSYSPTSPQYSPRSPSYSPSFNNNDKEQKDENGTH</sequence>